<accession>B1ZNE3</accession>
<protein>
    <recommendedName>
        <fullName evidence="1">Large ribosomal subunit protein uL22</fullName>
    </recommendedName>
    <alternativeName>
        <fullName evidence="2">50S ribosomal protein L22</fullName>
    </alternativeName>
</protein>
<name>RL22_OPITP</name>
<proteinExistence type="inferred from homology"/>
<keyword id="KW-1185">Reference proteome</keyword>
<keyword id="KW-0687">Ribonucleoprotein</keyword>
<keyword id="KW-0689">Ribosomal protein</keyword>
<keyword id="KW-0694">RNA-binding</keyword>
<keyword id="KW-0699">rRNA-binding</keyword>
<evidence type="ECO:0000255" key="1">
    <source>
        <dbReference type="HAMAP-Rule" id="MF_01331"/>
    </source>
</evidence>
<evidence type="ECO:0000305" key="2"/>
<organism>
    <name type="scientific">Opitutus terrae (strain DSM 11246 / JCM 15787 / PB90-1)</name>
    <dbReference type="NCBI Taxonomy" id="452637"/>
    <lineage>
        <taxon>Bacteria</taxon>
        <taxon>Pseudomonadati</taxon>
        <taxon>Verrucomicrobiota</taxon>
        <taxon>Opitutia</taxon>
        <taxon>Opitutales</taxon>
        <taxon>Opitutaceae</taxon>
        <taxon>Opitutus</taxon>
    </lineage>
</organism>
<reference key="1">
    <citation type="journal article" date="2011" name="J. Bacteriol.">
        <title>Genome sequence of the verrucomicrobium Opitutus terrae PB90-1, an abundant inhabitant of rice paddy soil ecosystems.</title>
        <authorList>
            <person name="van Passel M.W."/>
            <person name="Kant R."/>
            <person name="Palva A."/>
            <person name="Copeland A."/>
            <person name="Lucas S."/>
            <person name="Lapidus A."/>
            <person name="Glavina del Rio T."/>
            <person name="Pitluck S."/>
            <person name="Goltsman E."/>
            <person name="Clum A."/>
            <person name="Sun H."/>
            <person name="Schmutz J."/>
            <person name="Larimer F.W."/>
            <person name="Land M.L."/>
            <person name="Hauser L."/>
            <person name="Kyrpides N."/>
            <person name="Mikhailova N."/>
            <person name="Richardson P.P."/>
            <person name="Janssen P.H."/>
            <person name="de Vos W.M."/>
            <person name="Smidt H."/>
        </authorList>
    </citation>
    <scope>NUCLEOTIDE SEQUENCE [LARGE SCALE GENOMIC DNA]</scope>
    <source>
        <strain>DSM 11246 / JCM 15787 / PB90-1</strain>
    </source>
</reference>
<feature type="chain" id="PRO_1000166077" description="Large ribosomal subunit protein uL22">
    <location>
        <begin position="1"/>
        <end position="113"/>
    </location>
</feature>
<comment type="function">
    <text evidence="1">This protein binds specifically to 23S rRNA; its binding is stimulated by other ribosomal proteins, e.g. L4, L17, and L20. It is important during the early stages of 50S assembly. It makes multiple contacts with different domains of the 23S rRNA in the assembled 50S subunit and ribosome (By similarity).</text>
</comment>
<comment type="function">
    <text evidence="1">The globular domain of the protein is located near the polypeptide exit tunnel on the outside of the subunit, while an extended beta-hairpin is found that lines the wall of the exit tunnel in the center of the 70S ribosome.</text>
</comment>
<comment type="subunit">
    <text evidence="1">Part of the 50S ribosomal subunit.</text>
</comment>
<comment type="similarity">
    <text evidence="1">Belongs to the universal ribosomal protein uL22 family.</text>
</comment>
<sequence>MEVQALTRYARMSPKKMRDISRIIQGRKAAEAADYLALIPRKSARLIAKTLRSAIANAENNNNLSADALTVKLALIENGPVLKRFKAGARGSAMPRRKKMAHIRIVLTDGNSN</sequence>
<dbReference type="EMBL" id="CP001032">
    <property type="protein sequence ID" value="ACB73512.1"/>
    <property type="molecule type" value="Genomic_DNA"/>
</dbReference>
<dbReference type="RefSeq" id="WP_012373050.1">
    <property type="nucleotide sequence ID" value="NC_010571.1"/>
</dbReference>
<dbReference type="SMR" id="B1ZNE3"/>
<dbReference type="STRING" id="452637.Oter_0221"/>
<dbReference type="KEGG" id="ote:Oter_0221"/>
<dbReference type="eggNOG" id="COG0091">
    <property type="taxonomic scope" value="Bacteria"/>
</dbReference>
<dbReference type="HOGENOM" id="CLU_083987_3_2_0"/>
<dbReference type="OrthoDB" id="9805969at2"/>
<dbReference type="Proteomes" id="UP000007013">
    <property type="component" value="Chromosome"/>
</dbReference>
<dbReference type="GO" id="GO:0022625">
    <property type="term" value="C:cytosolic large ribosomal subunit"/>
    <property type="evidence" value="ECO:0007669"/>
    <property type="project" value="TreeGrafter"/>
</dbReference>
<dbReference type="GO" id="GO:0019843">
    <property type="term" value="F:rRNA binding"/>
    <property type="evidence" value="ECO:0007669"/>
    <property type="project" value="UniProtKB-UniRule"/>
</dbReference>
<dbReference type="GO" id="GO:0003735">
    <property type="term" value="F:structural constituent of ribosome"/>
    <property type="evidence" value="ECO:0007669"/>
    <property type="project" value="InterPro"/>
</dbReference>
<dbReference type="GO" id="GO:0006412">
    <property type="term" value="P:translation"/>
    <property type="evidence" value="ECO:0007669"/>
    <property type="project" value="UniProtKB-UniRule"/>
</dbReference>
<dbReference type="CDD" id="cd00336">
    <property type="entry name" value="Ribosomal_L22"/>
    <property type="match status" value="1"/>
</dbReference>
<dbReference type="Gene3D" id="3.90.470.10">
    <property type="entry name" value="Ribosomal protein L22/L17"/>
    <property type="match status" value="1"/>
</dbReference>
<dbReference type="HAMAP" id="MF_01331_B">
    <property type="entry name" value="Ribosomal_uL22_B"/>
    <property type="match status" value="1"/>
</dbReference>
<dbReference type="InterPro" id="IPR001063">
    <property type="entry name" value="Ribosomal_uL22"/>
</dbReference>
<dbReference type="InterPro" id="IPR005727">
    <property type="entry name" value="Ribosomal_uL22_bac/chlpt-type"/>
</dbReference>
<dbReference type="InterPro" id="IPR047867">
    <property type="entry name" value="Ribosomal_uL22_bac/org-type"/>
</dbReference>
<dbReference type="InterPro" id="IPR036394">
    <property type="entry name" value="Ribosomal_uL22_sf"/>
</dbReference>
<dbReference type="NCBIfam" id="TIGR01044">
    <property type="entry name" value="rplV_bact"/>
    <property type="match status" value="1"/>
</dbReference>
<dbReference type="PANTHER" id="PTHR13501">
    <property type="entry name" value="CHLOROPLAST 50S RIBOSOMAL PROTEIN L22-RELATED"/>
    <property type="match status" value="1"/>
</dbReference>
<dbReference type="PANTHER" id="PTHR13501:SF8">
    <property type="entry name" value="LARGE RIBOSOMAL SUBUNIT PROTEIN UL22M"/>
    <property type="match status" value="1"/>
</dbReference>
<dbReference type="Pfam" id="PF00237">
    <property type="entry name" value="Ribosomal_L22"/>
    <property type="match status" value="1"/>
</dbReference>
<dbReference type="SUPFAM" id="SSF54843">
    <property type="entry name" value="Ribosomal protein L22"/>
    <property type="match status" value="1"/>
</dbReference>
<gene>
    <name evidence="1" type="primary">rplV</name>
    <name type="ordered locus">Oter_0221</name>
</gene>